<evidence type="ECO:0000255" key="1">
    <source>
        <dbReference type="PROSITE-ProRule" id="PRU00042"/>
    </source>
</evidence>
<evidence type="ECO:0000256" key="2">
    <source>
        <dbReference type="SAM" id="MobiDB-lite"/>
    </source>
</evidence>
<evidence type="ECO:0000269" key="3">
    <source>
    </source>
</evidence>
<evidence type="ECO:0000269" key="4">
    <source>
    </source>
</evidence>
<evidence type="ECO:0000269" key="5">
    <source>
    </source>
</evidence>
<evidence type="ECO:0000269" key="6">
    <source>
    </source>
</evidence>
<evidence type="ECO:0000269" key="7">
    <source ref="6"/>
</evidence>
<evidence type="ECO:0000303" key="8">
    <source>
    </source>
</evidence>
<evidence type="ECO:0000303" key="9">
    <source>
    </source>
</evidence>
<evidence type="ECO:0000305" key="10"/>
<evidence type="ECO:0007744" key="11">
    <source>
    </source>
</evidence>
<evidence type="ECO:0007744" key="12">
    <source>
    </source>
</evidence>
<proteinExistence type="evidence at protein level"/>
<gene>
    <name type="primary">SALL2</name>
    <name type="synonym">KIAA0360</name>
    <name type="synonym">SAL2</name>
    <name type="synonym">ZNF795</name>
</gene>
<sequence>MSRRKQRKPQQLISDCEGPSASENGDASEEDHPQVCAKCCAQFTDPTEFLAHQNACSTDPPVMVIIGGQENPNNSSASSEPRPEGHNNPQVMDTEHSNPPDSGSSVPTDPTWGPERRGEESSGHFLVAATGTAAGGGGGLILASPKLGATPLPPESTPAPPPPPPPPPPPGVGSGHLNIPLILEELRVLQQRQIHQMQMTEQICRQVLLLGSLGQTVGAPASPSELPGTGTASSTKPLLPLFSPIKPVQTSKTLASSSSSSSSSSGAETPKQAFFHLYHPLGSQHPFSAGGVGRSHKPTPAPSPALPGSTDQLIASPHLAFPSTTGLLAAQCLGAARGLEATASPGLLKPKNGSGELSYGEVMGPLEKPGGRHKCRFCAKVFGSDSALQIHLRSHTGERPYKCNVCGNRFTTRGNLKVHFHRHREKYPHVQMNPHPVPEHLDYVITSSGLPYGMSVPPEKAEEEAATPGGGVERKPLVASTTALSATESLTLLSTSAGTATAPGLPAFNKFVLMKAVEPKNKADENTPPGSEGSAISGVAESSTATRMQLSKLVTSLPSWALLTNHFKSTGSFPFPYVLEPLGASPSETSKLQQLVEKIDRQGAVAVTSAASGAPTTSAPAPSSSASSGPNQCVICLRVLSCPRALRLHYGQHGGERPFKCKVCGRAFSTRGNLRAHFVGHKASPAARAQNSCPICQKKFTNAVTLQQHVRMHLGGQIPNGGTALPEGGGAAQENGSEQSTVSGARSFPQQQSQQPSPEEELSEEEEEEDEEEEEDVTDEDSLAGRGSESGGEKAISVRGDSEEASGAEEEVGTVAAAATAGKEMDSNEKTTQQSSLPPPPPPDSLDQPQPMEQGSSGVLGGKEEGGKPERSSSPASALTPEGEATSVTLVEELSLQEAMRKEPGESSSRKACEVCGQAFPSQAALEEHQKTHPKEGPLFTCVFCRQGFLERATLKKHMLLAHHQVQPFAPHGPQNIAALSLVPGCSPSITSTGLSPFPRKDDPTIP</sequence>
<organism>
    <name type="scientific">Homo sapiens</name>
    <name type="common">Human</name>
    <dbReference type="NCBI Taxonomy" id="9606"/>
    <lineage>
        <taxon>Eukaryota</taxon>
        <taxon>Metazoa</taxon>
        <taxon>Chordata</taxon>
        <taxon>Craniata</taxon>
        <taxon>Vertebrata</taxon>
        <taxon>Euteleostomi</taxon>
        <taxon>Mammalia</taxon>
        <taxon>Eutheria</taxon>
        <taxon>Euarchontoglires</taxon>
        <taxon>Primates</taxon>
        <taxon>Haplorrhini</taxon>
        <taxon>Catarrhini</taxon>
        <taxon>Hominidae</taxon>
        <taxon>Homo</taxon>
    </lineage>
</organism>
<reference key="1">
    <citation type="journal article" date="1996" name="Genomics">
        <title>Isolation, characterization, and organ-specific expression of two novel human zinc finger genes related to the Drosophila gene spalt.</title>
        <authorList>
            <person name="Kohlhase J."/>
            <person name="Schuh R."/>
            <person name="Dowe G."/>
            <person name="Kuehnlein R.P."/>
            <person name="Jaeckle H."/>
            <person name="Schroeder B."/>
            <person name="Schulz-Schaeffer W."/>
            <person name="Kretzschmar H.A."/>
            <person name="Koehler A."/>
            <person name="Mueller U."/>
            <person name="Raab-Vetter M."/>
            <person name="Burkhardt E."/>
            <person name="Engel W."/>
            <person name="Stick R."/>
        </authorList>
    </citation>
    <scope>NUCLEOTIDE SEQUENCE [MRNA] (ISOFORM 1)</scope>
    <source>
        <tissue>Fetus</tissue>
    </source>
</reference>
<reference key="2">
    <citation type="journal article" date="1997" name="DNA Res.">
        <title>Prediction of the coding sequences of unidentified human genes. VII. The complete sequences of 100 new cDNA clones from brain which can code for large proteins in vitro.</title>
        <authorList>
            <person name="Nagase T."/>
            <person name="Ishikawa K."/>
            <person name="Nakajima D."/>
            <person name="Ohira M."/>
            <person name="Seki N."/>
            <person name="Miyajima N."/>
            <person name="Tanaka A."/>
            <person name="Kotani H."/>
            <person name="Nomura N."/>
            <person name="Ohara O."/>
        </authorList>
    </citation>
    <scope>NUCLEOTIDE SEQUENCE [LARGE SCALE MRNA] (ISOFORM 1)</scope>
    <scope>VARIANT GLY-746</scope>
    <source>
        <tissue>Brain</tissue>
    </source>
</reference>
<reference key="3">
    <citation type="journal article" date="2002" name="DNA Res.">
        <title>Construction of expression-ready cDNA clones for KIAA genes: manual curation of 330 KIAA cDNA clones.</title>
        <authorList>
            <person name="Nakajima D."/>
            <person name="Okazaki N."/>
            <person name="Yamakawa H."/>
            <person name="Kikuno R."/>
            <person name="Ohara O."/>
            <person name="Nagase T."/>
        </authorList>
    </citation>
    <scope>SEQUENCE REVISION</scope>
</reference>
<reference key="4">
    <citation type="journal article" date="2003" name="Nature">
        <title>The DNA sequence and analysis of human chromosome 14.</title>
        <authorList>
            <person name="Heilig R."/>
            <person name="Eckenberg R."/>
            <person name="Petit J.-L."/>
            <person name="Fonknechten N."/>
            <person name="Da Silva C."/>
            <person name="Cattolico L."/>
            <person name="Levy M."/>
            <person name="Barbe V."/>
            <person name="De Berardinis V."/>
            <person name="Ureta-Vidal A."/>
            <person name="Pelletier E."/>
            <person name="Vico V."/>
            <person name="Anthouard V."/>
            <person name="Rowen L."/>
            <person name="Madan A."/>
            <person name="Qin S."/>
            <person name="Sun H."/>
            <person name="Du H."/>
            <person name="Pepin K."/>
            <person name="Artiguenave F."/>
            <person name="Robert C."/>
            <person name="Cruaud C."/>
            <person name="Bruels T."/>
            <person name="Jaillon O."/>
            <person name="Friedlander L."/>
            <person name="Samson G."/>
            <person name="Brottier P."/>
            <person name="Cure S."/>
            <person name="Segurens B."/>
            <person name="Aniere F."/>
            <person name="Samain S."/>
            <person name="Crespeau H."/>
            <person name="Abbasi N."/>
            <person name="Aiach N."/>
            <person name="Boscus D."/>
            <person name="Dickhoff R."/>
            <person name="Dors M."/>
            <person name="Dubois I."/>
            <person name="Friedman C."/>
            <person name="Gouyvenoux M."/>
            <person name="James R."/>
            <person name="Madan A."/>
            <person name="Mairey-Estrada B."/>
            <person name="Mangenot S."/>
            <person name="Martins N."/>
            <person name="Menard M."/>
            <person name="Oztas S."/>
            <person name="Ratcliffe A."/>
            <person name="Shaffer T."/>
            <person name="Trask B."/>
            <person name="Vacherie B."/>
            <person name="Bellemere C."/>
            <person name="Belser C."/>
            <person name="Besnard-Gonnet M."/>
            <person name="Bartol-Mavel D."/>
            <person name="Boutard M."/>
            <person name="Briez-Silla S."/>
            <person name="Combette S."/>
            <person name="Dufosse-Laurent V."/>
            <person name="Ferron C."/>
            <person name="Lechaplais C."/>
            <person name="Louesse C."/>
            <person name="Muselet D."/>
            <person name="Magdelenat G."/>
            <person name="Pateau E."/>
            <person name="Petit E."/>
            <person name="Sirvain-Trukniewicz P."/>
            <person name="Trybou A."/>
            <person name="Vega-Czarny N."/>
            <person name="Bataille E."/>
            <person name="Bluet E."/>
            <person name="Bordelais I."/>
            <person name="Dubois M."/>
            <person name="Dumont C."/>
            <person name="Guerin T."/>
            <person name="Haffray S."/>
            <person name="Hammadi R."/>
            <person name="Muanga J."/>
            <person name="Pellouin V."/>
            <person name="Robert D."/>
            <person name="Wunderle E."/>
            <person name="Gauguet G."/>
            <person name="Roy A."/>
            <person name="Sainte-Marthe L."/>
            <person name="Verdier J."/>
            <person name="Verdier-Discala C."/>
            <person name="Hillier L.W."/>
            <person name="Fulton L."/>
            <person name="McPherson J."/>
            <person name="Matsuda F."/>
            <person name="Wilson R."/>
            <person name="Scarpelli C."/>
            <person name="Gyapay G."/>
            <person name="Wincker P."/>
            <person name="Saurin W."/>
            <person name="Quetier F."/>
            <person name="Waterston R."/>
            <person name="Hood L."/>
            <person name="Weissenbach J."/>
        </authorList>
    </citation>
    <scope>NUCLEOTIDE SEQUENCE [LARGE SCALE GENOMIC DNA]</scope>
</reference>
<reference key="5">
    <citation type="journal article" date="2004" name="Genome Res.">
        <title>The status, quality, and expansion of the NIH full-length cDNA project: the Mammalian Gene Collection (MGC).</title>
        <authorList>
            <consortium name="The MGC Project Team"/>
        </authorList>
    </citation>
    <scope>NUCLEOTIDE SEQUENCE [LARGE SCALE MRNA] (ISOFORMS 1 AND 2)</scope>
    <scope>VARIANT PRO-122</scope>
    <source>
        <tissue>Brain</tissue>
    </source>
</reference>
<reference key="6">
    <citation type="submission" date="2002-01" db="EMBL/GenBank/DDBJ databases">
        <title>Homo sapiens mRNA for zinc finger protein, SALL2 exon 2.</title>
        <authorList>
            <person name="Morgan J.W."/>
            <person name="Ford D."/>
            <person name="Ma Y."/>
            <person name="Maizel A.L."/>
        </authorList>
    </citation>
    <scope>NUCLEOTIDE SEQUENCE [MRNA] OF 541-1005 (ISOFORM 1)</scope>
    <scope>VARIANT GLY-746</scope>
</reference>
<reference key="7">
    <citation type="journal article" date="2006" name="Dev. Biol.">
        <title>The vertebrate spalt genes in development and disease.</title>
        <authorList>
            <person name="Sweetman D."/>
            <person name="Muensterberg A."/>
        </authorList>
    </citation>
    <scope>DOMAIN</scope>
</reference>
<reference key="8">
    <citation type="journal article" date="2008" name="Proc. Natl. Acad. Sci. U.S.A.">
        <title>A quantitative atlas of mitotic phosphorylation.</title>
        <authorList>
            <person name="Dephoure N."/>
            <person name="Zhou C."/>
            <person name="Villen J."/>
            <person name="Beausoleil S.A."/>
            <person name="Bakalarski C.E."/>
            <person name="Elledge S.J."/>
            <person name="Gygi S.P."/>
        </authorList>
    </citation>
    <scope>IDENTIFICATION BY MASS SPECTROMETRY [LARGE SCALE ANALYSIS]</scope>
    <source>
        <tissue>Cervix carcinoma</tissue>
    </source>
</reference>
<reference key="9">
    <citation type="journal article" date="2008" name="Proteomics">
        <title>Proteomic analysis of ubiquitinated proteins in normal hepatocyte cell line Chang liver cells.</title>
        <authorList>
            <person name="Tan F."/>
            <person name="Lu L."/>
            <person name="Cai Y."/>
            <person name="Wang J."/>
            <person name="Xie Y."/>
            <person name="Wang L."/>
            <person name="Gong Y."/>
            <person name="Xu B.-E."/>
            <person name="Wu J."/>
            <person name="Luo Y."/>
            <person name="Qiang B."/>
            <person name="Yuan J."/>
            <person name="Sun X."/>
            <person name="Peng X."/>
        </authorList>
    </citation>
    <scope>UBIQUITINATION [LARGE SCALE ANALYSIS] AT LYS-911</scope>
    <scope>IDENTIFICATION BY MASS SPECTROMETRY</scope>
    <source>
        <tissue>Liver</tissue>
    </source>
</reference>
<reference key="10">
    <citation type="journal article" date="2009" name="Anal. Chem.">
        <title>Lys-N and trypsin cover complementary parts of the phosphoproteome in a refined SCX-based approach.</title>
        <authorList>
            <person name="Gauci S."/>
            <person name="Helbig A.O."/>
            <person name="Slijper M."/>
            <person name="Krijgsveld J."/>
            <person name="Heck A.J."/>
            <person name="Mohammed S."/>
        </authorList>
    </citation>
    <scope>IDENTIFICATION BY MASS SPECTROMETRY [LARGE SCALE ANALYSIS]</scope>
</reference>
<reference key="11">
    <citation type="journal article" date="2009" name="Sci. Signal.">
        <title>Quantitative phosphoproteomic analysis of T cell receptor signaling reveals system-wide modulation of protein-protein interactions.</title>
        <authorList>
            <person name="Mayya V."/>
            <person name="Lundgren D.H."/>
            <person name="Hwang S.-I."/>
            <person name="Rezaul K."/>
            <person name="Wu L."/>
            <person name="Eng J.K."/>
            <person name="Rodionov V."/>
            <person name="Han D.K."/>
        </authorList>
    </citation>
    <scope>PHOSPHORYLATION [LARGE SCALE ANALYSIS] AT SER-797; SER-802 AND SER-806</scope>
    <scope>IDENTIFICATION BY MASS SPECTROMETRY [LARGE SCALE ANALYSIS]</scope>
    <source>
        <tissue>Leukemic T-cell</tissue>
    </source>
</reference>
<reference key="12">
    <citation type="journal article" date="2011" name="Sci. Signal.">
        <title>System-wide temporal characterization of the proteome and phosphoproteome of human embryonic stem cell differentiation.</title>
        <authorList>
            <person name="Rigbolt K.T."/>
            <person name="Prokhorova T.A."/>
            <person name="Akimov V."/>
            <person name="Henningsen J."/>
            <person name="Johansen P.T."/>
            <person name="Kratchmarova I."/>
            <person name="Kassem M."/>
            <person name="Mann M."/>
            <person name="Olsen J.V."/>
            <person name="Blagoev B."/>
        </authorList>
    </citation>
    <scope>PHOSPHORYLATION [LARGE SCALE ANALYSIS] AT SER-243; SER-802 AND SER-806</scope>
    <scope>IDENTIFICATION BY MASS SPECTROMETRY [LARGE SCALE ANALYSIS]</scope>
</reference>
<reference key="13">
    <citation type="journal article" date="2013" name="J. Proteome Res.">
        <title>Toward a comprehensive characterization of a human cancer cell phosphoproteome.</title>
        <authorList>
            <person name="Zhou H."/>
            <person name="Di Palma S."/>
            <person name="Preisinger C."/>
            <person name="Peng M."/>
            <person name="Polat A.N."/>
            <person name="Heck A.J."/>
            <person name="Mohammed S."/>
        </authorList>
    </citation>
    <scope>IDENTIFICATION BY MASS SPECTROMETRY [LARGE SCALE ANALYSIS]</scope>
    <source>
        <tissue>Erythroleukemia</tissue>
    </source>
</reference>
<reference key="14">
    <citation type="journal article" date="2014" name="Hum. Mol. Genet.">
        <title>Mutation of SALL2 causes recessive ocular coloboma in humans and mice.</title>
        <authorList>
            <person name="Kelberman D."/>
            <person name="Islam L."/>
            <person name="Lakowski J."/>
            <person name="Bacchelli C."/>
            <person name="Chanudet E."/>
            <person name="Lescai F."/>
            <person name="Patel A."/>
            <person name="Stupka E."/>
            <person name="Buck A."/>
            <person name="Wolf S."/>
            <person name="Beales P.L."/>
            <person name="Jacques T.S."/>
            <person name="Bitner-Glindzicz M."/>
            <person name="Liasis A."/>
            <person name="Lehmann O.J."/>
            <person name="Kohlhase J."/>
            <person name="Nischal K.K."/>
            <person name="Sowden J.C."/>
        </authorList>
    </citation>
    <scope>FUNCTION</scope>
    <scope>TISSUE SPECIFICITY</scope>
    <scope>DEVELOPMENTAL STAGE</scope>
    <scope>INVOLVEMENT IN COAR</scope>
</reference>
<keyword id="KW-0025">Alternative splicing</keyword>
<keyword id="KW-0238">DNA-binding</keyword>
<keyword id="KW-1017">Isopeptide bond</keyword>
<keyword id="KW-0479">Metal-binding</keyword>
<keyword id="KW-0539">Nucleus</keyword>
<keyword id="KW-0597">Phosphoprotein</keyword>
<keyword id="KW-1267">Proteomics identification</keyword>
<keyword id="KW-1185">Reference proteome</keyword>
<keyword id="KW-0677">Repeat</keyword>
<keyword id="KW-0804">Transcription</keyword>
<keyword id="KW-0805">Transcription regulation</keyword>
<keyword id="KW-0832">Ubl conjugation</keyword>
<keyword id="KW-0862">Zinc</keyword>
<keyword id="KW-0863">Zinc-finger</keyword>
<comment type="function">
    <text evidence="5">Probable transcription factor that plays a role in eye development before, during, and after optic fissure closure.</text>
</comment>
<comment type="interaction">
    <interactant intactId="EBI-746180">
        <id>Q9Y467</id>
    </interactant>
    <interactant intactId="EBI-742887">
        <id>Q8TAP6</id>
        <label>CEP76</label>
    </interactant>
    <organismsDiffer>false</organismsDiffer>
    <experiments>4</experiments>
</comment>
<comment type="interaction">
    <interactant intactId="EBI-746180">
        <id>Q9Y467</id>
    </interactant>
    <interactant intactId="EBI-1387782">
        <id>P08138</id>
        <label>NGFR</label>
    </interactant>
    <organismsDiffer>false</organismsDiffer>
    <experiments>3</experiments>
</comment>
<comment type="interaction">
    <interactant intactId="EBI-746180">
        <id>Q9Y467</id>
    </interactant>
    <interactant intactId="EBI-10182121">
        <id>Q8NF64-2</id>
        <label>ZMIZ2</label>
    </interactant>
    <organismsDiffer>false</organismsDiffer>
    <experiments>3</experiments>
</comment>
<comment type="subcellular location">
    <subcellularLocation>
        <location evidence="10">Nucleus</location>
    </subcellularLocation>
</comment>
<comment type="alternative products">
    <event type="alternative splicing"/>
    <isoform>
        <id>Q9Y467-1</id>
        <name>1</name>
        <sequence type="displayed"/>
    </isoform>
    <isoform>
        <id>Q9Y467-3</id>
        <name>2</name>
        <sequence type="described" ref="VSP_056251 VSP_056252 VSP_056253"/>
    </isoform>
</comment>
<comment type="tissue specificity">
    <text evidence="5">Highest levels in adult brain (in different areas). Lower levels in heart; very low levels in kidney and pancreas. Expressed throughout the retina and lens vesicle as well as the periocular mesenchyme.</text>
</comment>
<comment type="developmental stage">
    <text evidence="5">In fetal brain exclusively in pontine nuclei. Expressed at 5 weeks of development, the stage at which optic fissure closure starts. Expression is maintained in the developing retina up to 8 weeks; after completion of fissure closure, it is restricted to the inner neuroblastic layer. Expressed in the cornea, lens, and retina at different developmental stages.</text>
</comment>
<comment type="disease" evidence="5">
    <disease id="DI-04214">
        <name>Coloboma, ocular, autosomal recessive</name>
        <acronym>COAR</acronym>
        <description>An ocular anomaly resulting from abnormal morphogenesis of the optic cup and stalk, and incomplete fusion of the fetal intra-ocular fissure during gestation. The clinical presentation is variable. Some individuals may present with minimal defects in the anterior iris leaf without other ocular defects. More complex malformations create a combination of iris, uveoretinal and/or optic nerve defects without or with microphthalmia or even anophthalmia.</description>
        <dbReference type="MIM" id="216820"/>
    </disease>
    <text>The disease is caused by variants affecting the gene represented in this entry.</text>
</comment>
<comment type="similarity">
    <text evidence="10">Belongs to the sal C2H2-type zinc-finger protein family.</text>
</comment>
<comment type="sequence caution" evidence="10">
    <conflict type="erroneous initiation">
        <sequence resource="EMBL-CDS" id="BAA21638"/>
    </conflict>
    <text>Extended N-terminus.</text>
</comment>
<accession>Q9Y467</accession>
<accession>B2RMX6</accession>
<accession>B9EGK8</accession>
<accession>Q8N656</accession>
<accession>Q9Y4G1</accession>
<name>SALL2_HUMAN</name>
<feature type="chain" id="PRO_0000047022" description="Sal-like protein 2">
    <location>
        <begin position="1"/>
        <end position="1007"/>
    </location>
</feature>
<feature type="zinc finger region" description="C2H2-type 1; atypical" evidence="1 9">
    <location>
        <begin position="34"/>
        <end position="56"/>
    </location>
</feature>
<feature type="zinc finger region" description="C2H2-type 2" evidence="1">
    <location>
        <begin position="373"/>
        <end position="395"/>
    </location>
</feature>
<feature type="zinc finger region" description="C2H2-type 3" evidence="1">
    <location>
        <begin position="401"/>
        <end position="423"/>
    </location>
</feature>
<feature type="zinc finger region" description="C2H2-type 4" evidence="1">
    <location>
        <begin position="631"/>
        <end position="653"/>
    </location>
</feature>
<feature type="zinc finger region" description="C2H2-type 5" evidence="1">
    <location>
        <begin position="659"/>
        <end position="681"/>
    </location>
</feature>
<feature type="zinc finger region" description="C2H2-type 6" evidence="1">
    <location>
        <begin position="691"/>
        <end position="713"/>
    </location>
</feature>
<feature type="zinc finger region" description="C2H2-type 7" evidence="1">
    <location>
        <begin position="911"/>
        <end position="933"/>
    </location>
</feature>
<feature type="zinc finger region" description="C2H2-type 8" evidence="1">
    <location>
        <begin position="940"/>
        <end position="963"/>
    </location>
</feature>
<feature type="region of interest" description="Disordered" evidence="2">
    <location>
        <begin position="1"/>
        <end position="33"/>
    </location>
</feature>
<feature type="region of interest" description="Disordered" evidence="2">
    <location>
        <begin position="59"/>
        <end position="121"/>
    </location>
</feature>
<feature type="region of interest" description="Disordered" evidence="2">
    <location>
        <begin position="137"/>
        <end position="177"/>
    </location>
</feature>
<feature type="region of interest" description="Disordered" evidence="2">
    <location>
        <begin position="220"/>
        <end position="243"/>
    </location>
</feature>
<feature type="region of interest" description="Disordered" evidence="2">
    <location>
        <begin position="286"/>
        <end position="306"/>
    </location>
</feature>
<feature type="region of interest" description="Disordered" evidence="2">
    <location>
        <begin position="520"/>
        <end position="540"/>
    </location>
</feature>
<feature type="region of interest" description="Disordered" evidence="2">
    <location>
        <begin position="610"/>
        <end position="629"/>
    </location>
</feature>
<feature type="region of interest" description="Disordered" evidence="2">
    <location>
        <begin position="714"/>
        <end position="886"/>
    </location>
</feature>
<feature type="compositionally biased region" description="Low complexity" evidence="2">
    <location>
        <begin position="70"/>
        <end position="80"/>
    </location>
</feature>
<feature type="compositionally biased region" description="Polar residues" evidence="2">
    <location>
        <begin position="99"/>
        <end position="108"/>
    </location>
</feature>
<feature type="compositionally biased region" description="Pro residues" evidence="2">
    <location>
        <begin position="151"/>
        <end position="171"/>
    </location>
</feature>
<feature type="compositionally biased region" description="Polar residues" evidence="2">
    <location>
        <begin position="734"/>
        <end position="744"/>
    </location>
</feature>
<feature type="compositionally biased region" description="Low complexity" evidence="2">
    <location>
        <begin position="747"/>
        <end position="757"/>
    </location>
</feature>
<feature type="compositionally biased region" description="Acidic residues" evidence="2">
    <location>
        <begin position="758"/>
        <end position="782"/>
    </location>
</feature>
<feature type="compositionally biased region" description="Acidic residues" evidence="2">
    <location>
        <begin position="803"/>
        <end position="812"/>
    </location>
</feature>
<feature type="compositionally biased region" description="Basic and acidic residues" evidence="2">
    <location>
        <begin position="862"/>
        <end position="871"/>
    </location>
</feature>
<feature type="modified residue" description="Phosphoserine" evidence="12">
    <location>
        <position position="243"/>
    </location>
</feature>
<feature type="modified residue" description="Phosphoserine" evidence="11">
    <location>
        <position position="797"/>
    </location>
</feature>
<feature type="modified residue" description="Phosphoserine" evidence="11 12">
    <location>
        <position position="802"/>
    </location>
</feature>
<feature type="modified residue" description="Phosphoserine" evidence="11 12">
    <location>
        <position position="806"/>
    </location>
</feature>
<feature type="cross-link" description="Glycyl lysine isopeptide (Lys-Gly) (interchain with G-Cter in ubiquitin)" evidence="4">
    <location>
        <position position="911"/>
    </location>
</feature>
<feature type="splice variant" id="VSP_056251" description="In isoform 2." evidence="8">
    <original>MSRRKQRKPQQLISDCEGPSASEN</original>
    <variation>MAHESERSSRLGVPCGEPAELG</variation>
    <location>
        <begin position="1"/>
        <end position="24"/>
    </location>
</feature>
<feature type="splice variant" id="VSP_056252" description="In isoform 2." evidence="8">
    <original>GTAAGGGGGLILASPKLGATPLPPESTPAPPPPPPPPPPPGVGSGHLNIPLILEELRVLQQRQIHQMQMT</original>
    <variation>EPVCGIPVKWPAHEALEFQLHLHYHSKPGPTSAVWPRNCGWEGASNNGIQGSQGEDSPPPISASCTQGSA</variation>
    <location>
        <begin position="131"/>
        <end position="200"/>
    </location>
</feature>
<feature type="splice variant" id="VSP_056253" description="In isoform 2." evidence="8">
    <location>
        <begin position="201"/>
        <end position="1007"/>
    </location>
</feature>
<feature type="sequence variant" id="VAR_014129" description="In dbSNP:rs2242527.">
    <original>S</original>
    <variation>C</variation>
    <location>
        <position position="75"/>
    </location>
</feature>
<feature type="sequence variant" id="VAR_014130" description="In dbSNP:rs1263811." evidence="3">
    <original>S</original>
    <variation>P</variation>
    <location>
        <position position="122"/>
    </location>
</feature>
<feature type="sequence variant" id="VAR_014131" description="In dbSNP:rs1263810." evidence="6 7">
    <original>R</original>
    <variation>G</variation>
    <location>
        <position position="746"/>
    </location>
</feature>
<feature type="sequence conflict" description="In Ref. 1; X98834 and 5; AAI36529/AAI36530." evidence="10" ref="1 5">
    <original>R</original>
    <variation>L</variation>
    <location>
        <position position="547"/>
    </location>
</feature>
<feature type="sequence conflict" description="In Ref. 1; X98834." evidence="10" ref="1">
    <original>V</original>
    <variation>M</variation>
    <location>
        <position position="554"/>
    </location>
</feature>
<feature type="sequence conflict" description="In Ref. 1; X98834." evidence="10" ref="1">
    <original>FPYVLEP</original>
    <variation>LPLCARA</variation>
    <location>
        <begin position="575"/>
        <end position="581"/>
    </location>
</feature>
<dbReference type="EMBL" id="X98834">
    <property type="status" value="NOT_ANNOTATED_CDS"/>
    <property type="molecule type" value="mRNA"/>
</dbReference>
<dbReference type="EMBL" id="AB002358">
    <property type="protein sequence ID" value="BAA21638.2"/>
    <property type="status" value="ALT_INIT"/>
    <property type="molecule type" value="mRNA"/>
</dbReference>
<dbReference type="EMBL" id="AE000521">
    <property type="status" value="NOT_ANNOTATED_CDS"/>
    <property type="molecule type" value="Genomic_DNA"/>
</dbReference>
<dbReference type="EMBL" id="AE000658">
    <property type="status" value="NOT_ANNOTATED_CDS"/>
    <property type="molecule type" value="Genomic_DNA"/>
</dbReference>
<dbReference type="EMBL" id="BC024245">
    <property type="protein sequence ID" value="AAH24245.1"/>
    <property type="molecule type" value="mRNA"/>
</dbReference>
<dbReference type="EMBL" id="BC090958">
    <property type="protein sequence ID" value="AAH90958.1"/>
    <property type="molecule type" value="mRNA"/>
</dbReference>
<dbReference type="EMBL" id="BC136528">
    <property type="protein sequence ID" value="AAI36529.1"/>
    <property type="molecule type" value="mRNA"/>
</dbReference>
<dbReference type="EMBL" id="BC136529">
    <property type="protein sequence ID" value="AAI36530.1"/>
    <property type="molecule type" value="mRNA"/>
</dbReference>
<dbReference type="EMBL" id="AF465630">
    <property type="protein sequence ID" value="AAL74188.1"/>
    <property type="molecule type" value="mRNA"/>
</dbReference>
<dbReference type="CCDS" id="CCDS32045.1">
    <molecule id="Q9Y467-1"/>
</dbReference>
<dbReference type="RefSeq" id="NP_001278375.1">
    <property type="nucleotide sequence ID" value="NM_001291446.1"/>
</dbReference>
<dbReference type="RefSeq" id="NP_001278376.1">
    <property type="nucleotide sequence ID" value="NM_001291447.1"/>
</dbReference>
<dbReference type="RefSeq" id="NP_005398.2">
    <molecule id="Q9Y467-1"/>
    <property type="nucleotide sequence ID" value="NM_005407.3"/>
</dbReference>
<dbReference type="BioGRID" id="112204">
    <property type="interactions" value="93"/>
</dbReference>
<dbReference type="FunCoup" id="Q9Y467">
    <property type="interactions" value="840"/>
</dbReference>
<dbReference type="IntAct" id="Q9Y467">
    <property type="interactions" value="74"/>
</dbReference>
<dbReference type="MINT" id="Q9Y467"/>
<dbReference type="STRING" id="9606.ENSP00000483562"/>
<dbReference type="GlyCosmos" id="Q9Y467">
    <property type="glycosylation" value="2 sites, 1 glycan"/>
</dbReference>
<dbReference type="GlyGen" id="Q9Y467">
    <property type="glycosylation" value="12 sites, 1 N-linked glycan (1 site), 1 O-linked glycan (9 sites)"/>
</dbReference>
<dbReference type="iPTMnet" id="Q9Y467"/>
<dbReference type="PhosphoSitePlus" id="Q9Y467"/>
<dbReference type="BioMuta" id="SALL2"/>
<dbReference type="DMDM" id="296453020"/>
<dbReference type="jPOST" id="Q9Y467"/>
<dbReference type="MassIVE" id="Q9Y467"/>
<dbReference type="PaxDb" id="9606-ENSP00000483562"/>
<dbReference type="PeptideAtlas" id="Q9Y467"/>
<dbReference type="ProteomicsDB" id="72132"/>
<dbReference type="ProteomicsDB" id="86114">
    <molecule id="Q9Y467-1"/>
</dbReference>
<dbReference type="Pumba" id="Q9Y467"/>
<dbReference type="Antibodypedia" id="22191">
    <property type="antibodies" value="96 antibodies from 20 providers"/>
</dbReference>
<dbReference type="DNASU" id="6297"/>
<dbReference type="Ensembl" id="ENST00000611430.4">
    <molecule id="Q9Y467-3"/>
    <property type="protein sequence ID" value="ENSP00000484460.1"/>
    <property type="gene ID" value="ENSG00000165821.12"/>
</dbReference>
<dbReference type="Ensembl" id="ENST00000614342.1">
    <molecule id="Q9Y467-1"/>
    <property type="protein sequence ID" value="ENSP00000483562.1"/>
    <property type="gene ID" value="ENSG00000165821.12"/>
</dbReference>
<dbReference type="GeneID" id="6297"/>
<dbReference type="KEGG" id="hsa:6297"/>
<dbReference type="UCSC" id="uc032atc.2">
    <molecule id="Q9Y467-1"/>
    <property type="organism name" value="human"/>
</dbReference>
<dbReference type="AGR" id="HGNC:10526"/>
<dbReference type="CTD" id="6297"/>
<dbReference type="DisGeNET" id="6297"/>
<dbReference type="GeneCards" id="SALL2"/>
<dbReference type="HGNC" id="HGNC:10526">
    <property type="gene designation" value="SALL2"/>
</dbReference>
<dbReference type="HPA" id="ENSG00000165821">
    <property type="expression patterns" value="Tissue enhanced (brain)"/>
</dbReference>
<dbReference type="MalaCards" id="SALL2"/>
<dbReference type="MIM" id="216820">
    <property type="type" value="phenotype"/>
</dbReference>
<dbReference type="MIM" id="602219">
    <property type="type" value="gene"/>
</dbReference>
<dbReference type="neXtProt" id="NX_Q9Y467"/>
<dbReference type="OpenTargets" id="ENSG00000165821"/>
<dbReference type="Orphanet" id="98942">
    <property type="disease" value="Coloboma of choroid and retina"/>
</dbReference>
<dbReference type="Orphanet" id="98943">
    <property type="disease" value="Coloboma of eye lens"/>
</dbReference>
<dbReference type="Orphanet" id="98946">
    <property type="disease" value="Coloboma of eyelid"/>
</dbReference>
<dbReference type="Orphanet" id="98944">
    <property type="disease" value="Coloboma of iris"/>
</dbReference>
<dbReference type="Orphanet" id="98945">
    <property type="disease" value="Coloboma of macula"/>
</dbReference>
<dbReference type="Orphanet" id="98947">
    <property type="disease" value="Coloboma of optic disc"/>
</dbReference>
<dbReference type="Orphanet" id="99861">
    <property type="disease" value="Precursor T-cell acute lymphoblastic leukemia"/>
</dbReference>
<dbReference type="PharmGKB" id="PA34934"/>
<dbReference type="VEuPathDB" id="HostDB:ENSG00000165821"/>
<dbReference type="eggNOG" id="KOG1074">
    <property type="taxonomic scope" value="Eukaryota"/>
</dbReference>
<dbReference type="GeneTree" id="ENSGT00940000162245"/>
<dbReference type="HOGENOM" id="CLU_013111_0_0_1"/>
<dbReference type="InParanoid" id="Q9Y467"/>
<dbReference type="OMA" id="STHVWNC"/>
<dbReference type="OrthoDB" id="8749569at2759"/>
<dbReference type="PAN-GO" id="Q9Y467">
    <property type="GO annotations" value="4 GO annotations based on evolutionary models"/>
</dbReference>
<dbReference type="PhylomeDB" id="Q9Y467"/>
<dbReference type="TreeFam" id="TF317003"/>
<dbReference type="PathwayCommons" id="Q9Y467"/>
<dbReference type="SignaLink" id="Q9Y467"/>
<dbReference type="SIGNOR" id="Q9Y467"/>
<dbReference type="BioGRID-ORCS" id="6297">
    <property type="hits" value="12 hits in 1175 CRISPR screens"/>
</dbReference>
<dbReference type="ChiTaRS" id="SALL2">
    <property type="organism name" value="human"/>
</dbReference>
<dbReference type="GeneWiki" id="SALL2"/>
<dbReference type="GenomeRNAi" id="6297"/>
<dbReference type="Pharos" id="Q9Y467">
    <property type="development level" value="Tbio"/>
</dbReference>
<dbReference type="PRO" id="PR:Q9Y467"/>
<dbReference type="Proteomes" id="UP000005640">
    <property type="component" value="Chromosome 14"/>
</dbReference>
<dbReference type="RNAct" id="Q9Y467">
    <property type="molecule type" value="protein"/>
</dbReference>
<dbReference type="Bgee" id="ENSG00000165821">
    <property type="expression patterns" value="Expressed in cerebellar vermis and 177 other cell types or tissues"/>
</dbReference>
<dbReference type="ExpressionAtlas" id="Q9Y467">
    <property type="expression patterns" value="baseline and differential"/>
</dbReference>
<dbReference type="GO" id="GO:0005634">
    <property type="term" value="C:nucleus"/>
    <property type="evidence" value="ECO:0000318"/>
    <property type="project" value="GO_Central"/>
</dbReference>
<dbReference type="GO" id="GO:0001228">
    <property type="term" value="F:DNA-binding transcription activator activity, RNA polymerase II-specific"/>
    <property type="evidence" value="ECO:0000314"/>
    <property type="project" value="NTNU_SB"/>
</dbReference>
<dbReference type="GO" id="GO:0000981">
    <property type="term" value="F:DNA-binding transcription factor activity, RNA polymerase II-specific"/>
    <property type="evidence" value="ECO:0000318"/>
    <property type="project" value="GO_Central"/>
</dbReference>
<dbReference type="GO" id="GO:0000977">
    <property type="term" value="F:RNA polymerase II transcription regulatory region sequence-specific DNA binding"/>
    <property type="evidence" value="ECO:0000314"/>
    <property type="project" value="NTNU_SB"/>
</dbReference>
<dbReference type="GO" id="GO:0008270">
    <property type="term" value="F:zinc ion binding"/>
    <property type="evidence" value="ECO:0007669"/>
    <property type="project" value="UniProtKB-KW"/>
</dbReference>
<dbReference type="GO" id="GO:0001654">
    <property type="term" value="P:eye development"/>
    <property type="evidence" value="ECO:0000314"/>
    <property type="project" value="UniProtKB"/>
</dbReference>
<dbReference type="GO" id="GO:0045944">
    <property type="term" value="P:positive regulation of transcription by RNA polymerase II"/>
    <property type="evidence" value="ECO:0000315"/>
    <property type="project" value="NTNU_SB"/>
</dbReference>
<dbReference type="GO" id="GO:0006357">
    <property type="term" value="P:regulation of transcription by RNA polymerase II"/>
    <property type="evidence" value="ECO:0000318"/>
    <property type="project" value="GO_Central"/>
</dbReference>
<dbReference type="CDD" id="cd20908">
    <property type="entry name" value="SUF4-like"/>
    <property type="match status" value="1"/>
</dbReference>
<dbReference type="FunFam" id="3.30.160.60:FF:000556">
    <property type="entry name" value="sal-like protein 2 isoform X2"/>
    <property type="match status" value="1"/>
</dbReference>
<dbReference type="FunFam" id="3.30.160.60:FF:000574">
    <property type="entry name" value="sal-like protein 2 isoform X2"/>
    <property type="match status" value="1"/>
</dbReference>
<dbReference type="FunFam" id="3.30.160.60:FF:000832">
    <property type="entry name" value="sal-like protein 2 isoform X2"/>
    <property type="match status" value="1"/>
</dbReference>
<dbReference type="FunFam" id="3.30.160.60:FF:000215">
    <property type="entry name" value="Spalt-like transcription factor 3"/>
    <property type="match status" value="1"/>
</dbReference>
<dbReference type="Gene3D" id="3.30.160.60">
    <property type="entry name" value="Classic Zinc Finger"/>
    <property type="match status" value="4"/>
</dbReference>
<dbReference type="InterPro" id="IPR051565">
    <property type="entry name" value="Sal_C2H2-zinc-finger"/>
</dbReference>
<dbReference type="InterPro" id="IPR036236">
    <property type="entry name" value="Znf_C2H2_sf"/>
</dbReference>
<dbReference type="InterPro" id="IPR013087">
    <property type="entry name" value="Znf_C2H2_type"/>
</dbReference>
<dbReference type="PANTHER" id="PTHR23233">
    <property type="entry name" value="SAL-LIKE PROTEIN"/>
    <property type="match status" value="1"/>
</dbReference>
<dbReference type="PANTHER" id="PTHR23233:SF15">
    <property type="entry name" value="SAL-LIKE PROTEIN 2"/>
    <property type="match status" value="1"/>
</dbReference>
<dbReference type="Pfam" id="PF00096">
    <property type="entry name" value="zf-C2H2"/>
    <property type="match status" value="3"/>
</dbReference>
<dbReference type="Pfam" id="PF13912">
    <property type="entry name" value="zf-C2H2_6"/>
    <property type="match status" value="1"/>
</dbReference>
<dbReference type="SMART" id="SM00355">
    <property type="entry name" value="ZnF_C2H2"/>
    <property type="match status" value="7"/>
</dbReference>
<dbReference type="SUPFAM" id="SSF57667">
    <property type="entry name" value="beta-beta-alpha zinc fingers"/>
    <property type="match status" value="3"/>
</dbReference>
<dbReference type="PROSITE" id="PS00028">
    <property type="entry name" value="ZINC_FINGER_C2H2_1"/>
    <property type="match status" value="7"/>
</dbReference>
<dbReference type="PROSITE" id="PS50157">
    <property type="entry name" value="ZINC_FINGER_C2H2_2"/>
    <property type="match status" value="7"/>
</dbReference>
<protein>
    <recommendedName>
        <fullName>Sal-like protein 2</fullName>
    </recommendedName>
    <alternativeName>
        <fullName>Zinc finger protein 795</fullName>
    </alternativeName>
    <alternativeName>
        <fullName>Zinc finger protein SALL2</fullName>
    </alternativeName>
    <alternativeName>
        <fullName>Zinc finger protein Spalt-2</fullName>
        <shortName>Sal-2</shortName>
        <shortName>hSal2</shortName>
    </alternativeName>
</protein>